<gene>
    <name evidence="1" type="primary">hisF</name>
    <name type="ordered locus">Lm4b_00589</name>
</gene>
<feature type="chain" id="PRO_1000213213" description="Imidazole glycerol phosphate synthase subunit HisF">
    <location>
        <begin position="1"/>
        <end position="251"/>
    </location>
</feature>
<feature type="active site" evidence="1">
    <location>
        <position position="11"/>
    </location>
</feature>
<feature type="active site" evidence="1">
    <location>
        <position position="130"/>
    </location>
</feature>
<organism>
    <name type="scientific">Listeria monocytogenes serotype 4b (strain CLIP80459)</name>
    <dbReference type="NCBI Taxonomy" id="568819"/>
    <lineage>
        <taxon>Bacteria</taxon>
        <taxon>Bacillati</taxon>
        <taxon>Bacillota</taxon>
        <taxon>Bacilli</taxon>
        <taxon>Bacillales</taxon>
        <taxon>Listeriaceae</taxon>
        <taxon>Listeria</taxon>
    </lineage>
</organism>
<name>HIS6_LISMC</name>
<keyword id="KW-0028">Amino-acid biosynthesis</keyword>
<keyword id="KW-0963">Cytoplasm</keyword>
<keyword id="KW-0368">Histidine biosynthesis</keyword>
<keyword id="KW-0456">Lyase</keyword>
<sequence>MLTKRIIPCLDVTAGRVVKGVNFVSLTDVGDPVEIAKAYNEAGADELVFLDITATVELRQTMIDVVERTAEQVFIPLTVGGGISSVSDMKELLQAGADKISLNSAAIKRPELIQEGAAKFGNQCIVVAIDAKWNGTNWSVFTRGGRNDTGLDAIEWAKKAVQLGAGEILLTSMDGDGTKNGYDIPLTKAISAAVSVPVIASGGCGNAAHMAEVFEKTKATAALAASIFHYGELSIKNVKTTLLEKGVNIRP</sequence>
<dbReference type="EC" id="4.3.2.10" evidence="1"/>
<dbReference type="EMBL" id="FM242711">
    <property type="protein sequence ID" value="CAS04357.1"/>
    <property type="molecule type" value="Genomic_DNA"/>
</dbReference>
<dbReference type="RefSeq" id="WP_003725465.1">
    <property type="nucleotide sequence ID" value="NC_012488.1"/>
</dbReference>
<dbReference type="SMR" id="C1L0J2"/>
<dbReference type="KEGG" id="lmc:Lm4b_00589"/>
<dbReference type="HOGENOM" id="CLU_048577_4_0_9"/>
<dbReference type="UniPathway" id="UPA00031">
    <property type="reaction ID" value="UER00010"/>
</dbReference>
<dbReference type="GO" id="GO:0005737">
    <property type="term" value="C:cytoplasm"/>
    <property type="evidence" value="ECO:0007669"/>
    <property type="project" value="UniProtKB-SubCell"/>
</dbReference>
<dbReference type="GO" id="GO:0000107">
    <property type="term" value="F:imidazoleglycerol-phosphate synthase activity"/>
    <property type="evidence" value="ECO:0007669"/>
    <property type="project" value="UniProtKB-UniRule"/>
</dbReference>
<dbReference type="GO" id="GO:0016829">
    <property type="term" value="F:lyase activity"/>
    <property type="evidence" value="ECO:0007669"/>
    <property type="project" value="UniProtKB-KW"/>
</dbReference>
<dbReference type="GO" id="GO:0000105">
    <property type="term" value="P:L-histidine biosynthetic process"/>
    <property type="evidence" value="ECO:0007669"/>
    <property type="project" value="UniProtKB-UniRule"/>
</dbReference>
<dbReference type="CDD" id="cd04731">
    <property type="entry name" value="HisF"/>
    <property type="match status" value="1"/>
</dbReference>
<dbReference type="FunFam" id="3.20.20.70:FF:000006">
    <property type="entry name" value="Imidazole glycerol phosphate synthase subunit HisF"/>
    <property type="match status" value="1"/>
</dbReference>
<dbReference type="Gene3D" id="3.20.20.70">
    <property type="entry name" value="Aldolase class I"/>
    <property type="match status" value="1"/>
</dbReference>
<dbReference type="HAMAP" id="MF_01013">
    <property type="entry name" value="HisF"/>
    <property type="match status" value="1"/>
</dbReference>
<dbReference type="InterPro" id="IPR013785">
    <property type="entry name" value="Aldolase_TIM"/>
</dbReference>
<dbReference type="InterPro" id="IPR006062">
    <property type="entry name" value="His_biosynth"/>
</dbReference>
<dbReference type="InterPro" id="IPR004651">
    <property type="entry name" value="HisF"/>
</dbReference>
<dbReference type="InterPro" id="IPR050064">
    <property type="entry name" value="IGPS_HisA/HisF"/>
</dbReference>
<dbReference type="InterPro" id="IPR011060">
    <property type="entry name" value="RibuloseP-bd_barrel"/>
</dbReference>
<dbReference type="NCBIfam" id="TIGR00735">
    <property type="entry name" value="hisF"/>
    <property type="match status" value="1"/>
</dbReference>
<dbReference type="PANTHER" id="PTHR21235:SF2">
    <property type="entry name" value="IMIDAZOLE GLYCEROL PHOSPHATE SYNTHASE HISHF"/>
    <property type="match status" value="1"/>
</dbReference>
<dbReference type="PANTHER" id="PTHR21235">
    <property type="entry name" value="IMIDAZOLE GLYCEROL PHOSPHATE SYNTHASE SUBUNIT HISF/H IGP SYNTHASE SUBUNIT HISF/H"/>
    <property type="match status" value="1"/>
</dbReference>
<dbReference type="Pfam" id="PF00977">
    <property type="entry name" value="His_biosynth"/>
    <property type="match status" value="1"/>
</dbReference>
<dbReference type="SUPFAM" id="SSF51366">
    <property type="entry name" value="Ribulose-phoshate binding barrel"/>
    <property type="match status" value="1"/>
</dbReference>
<comment type="function">
    <text evidence="1">IGPS catalyzes the conversion of PRFAR and glutamine to IGP, AICAR and glutamate. The HisF subunit catalyzes the cyclization activity that produces IGP and AICAR from PRFAR using the ammonia provided by the HisH subunit.</text>
</comment>
<comment type="catalytic activity">
    <reaction evidence="1">
        <text>5-[(5-phospho-1-deoxy-D-ribulos-1-ylimino)methylamino]-1-(5-phospho-beta-D-ribosyl)imidazole-4-carboxamide + L-glutamine = D-erythro-1-(imidazol-4-yl)glycerol 3-phosphate + 5-amino-1-(5-phospho-beta-D-ribosyl)imidazole-4-carboxamide + L-glutamate + H(+)</text>
        <dbReference type="Rhea" id="RHEA:24793"/>
        <dbReference type="ChEBI" id="CHEBI:15378"/>
        <dbReference type="ChEBI" id="CHEBI:29985"/>
        <dbReference type="ChEBI" id="CHEBI:58278"/>
        <dbReference type="ChEBI" id="CHEBI:58359"/>
        <dbReference type="ChEBI" id="CHEBI:58475"/>
        <dbReference type="ChEBI" id="CHEBI:58525"/>
        <dbReference type="EC" id="4.3.2.10"/>
    </reaction>
</comment>
<comment type="pathway">
    <text evidence="1">Amino-acid biosynthesis; L-histidine biosynthesis; L-histidine from 5-phospho-alpha-D-ribose 1-diphosphate: step 5/9.</text>
</comment>
<comment type="subunit">
    <text evidence="1">Heterodimer of HisH and HisF.</text>
</comment>
<comment type="subcellular location">
    <subcellularLocation>
        <location evidence="1">Cytoplasm</location>
    </subcellularLocation>
</comment>
<comment type="similarity">
    <text evidence="1">Belongs to the HisA/HisF family.</text>
</comment>
<protein>
    <recommendedName>
        <fullName evidence="1">Imidazole glycerol phosphate synthase subunit HisF</fullName>
        <ecNumber evidence="1">4.3.2.10</ecNumber>
    </recommendedName>
    <alternativeName>
        <fullName evidence="1">IGP synthase cyclase subunit</fullName>
    </alternativeName>
    <alternativeName>
        <fullName evidence="1">IGP synthase subunit HisF</fullName>
    </alternativeName>
    <alternativeName>
        <fullName evidence="1">ImGP synthase subunit HisF</fullName>
        <shortName evidence="1">IGPS subunit HisF</shortName>
    </alternativeName>
</protein>
<accession>C1L0J2</accession>
<evidence type="ECO:0000255" key="1">
    <source>
        <dbReference type="HAMAP-Rule" id="MF_01013"/>
    </source>
</evidence>
<proteinExistence type="inferred from homology"/>
<reference key="1">
    <citation type="journal article" date="2012" name="BMC Genomics">
        <title>Comparative genomics and transcriptomics of lineages I, II, and III strains of Listeria monocytogenes.</title>
        <authorList>
            <person name="Hain T."/>
            <person name="Ghai R."/>
            <person name="Billion A."/>
            <person name="Kuenne C.T."/>
            <person name="Steinweg C."/>
            <person name="Izar B."/>
            <person name="Mohamed W."/>
            <person name="Mraheil M."/>
            <person name="Domann E."/>
            <person name="Schaffrath S."/>
            <person name="Karst U."/>
            <person name="Goesmann A."/>
            <person name="Oehm S."/>
            <person name="Puhler A."/>
            <person name="Merkl R."/>
            <person name="Vorwerk S."/>
            <person name="Glaser P."/>
            <person name="Garrido P."/>
            <person name="Rusniok C."/>
            <person name="Buchrieser C."/>
            <person name="Goebel W."/>
            <person name="Chakraborty T."/>
        </authorList>
    </citation>
    <scope>NUCLEOTIDE SEQUENCE [LARGE SCALE GENOMIC DNA]</scope>
    <source>
        <strain>CLIP80459</strain>
    </source>
</reference>